<dbReference type="EC" id="7.5.2.1" evidence="1 7 8"/>
<dbReference type="EMBL" id="J01648">
    <property type="protein sequence ID" value="AAB59057.1"/>
    <property type="molecule type" value="Genomic_DNA"/>
</dbReference>
<dbReference type="EMBL" id="U00006">
    <property type="protein sequence ID" value="AAC43129.1"/>
    <property type="molecule type" value="Genomic_DNA"/>
</dbReference>
<dbReference type="EMBL" id="U00096">
    <property type="protein sequence ID" value="AAC77005.1"/>
    <property type="molecule type" value="Genomic_DNA"/>
</dbReference>
<dbReference type="EMBL" id="AP009048">
    <property type="protein sequence ID" value="BAE78037.1"/>
    <property type="molecule type" value="Genomic_DNA"/>
</dbReference>
<dbReference type="EMBL" id="V00303">
    <property type="protein sequence ID" value="CAA23582.1"/>
    <property type="status" value="ALT_INIT"/>
    <property type="molecule type" value="Genomic_DNA"/>
</dbReference>
<dbReference type="PIR" id="B65211">
    <property type="entry name" value="MMECMK"/>
</dbReference>
<dbReference type="RefSeq" id="NP_418459.1">
    <property type="nucleotide sequence ID" value="NC_000913.3"/>
</dbReference>
<dbReference type="RefSeq" id="WP_000179165.1">
    <property type="nucleotide sequence ID" value="NZ_STEB01000022.1"/>
</dbReference>
<dbReference type="PDB" id="1Q12">
    <property type="method" value="X-ray"/>
    <property type="resolution" value="2.60 A"/>
    <property type="chains" value="A/B/C/D=1-371"/>
</dbReference>
<dbReference type="PDB" id="1Q1B">
    <property type="method" value="X-ray"/>
    <property type="resolution" value="2.80 A"/>
    <property type="chains" value="A/B/C/D=1-371"/>
</dbReference>
<dbReference type="PDB" id="1Q1E">
    <property type="method" value="X-ray"/>
    <property type="resolution" value="2.90 A"/>
    <property type="chains" value="A/B=1-371"/>
</dbReference>
<dbReference type="PDB" id="2AWN">
    <property type="method" value="X-ray"/>
    <property type="resolution" value="2.30 A"/>
    <property type="chains" value="A/B/C/D=1-371"/>
</dbReference>
<dbReference type="PDB" id="2AWO">
    <property type="method" value="X-ray"/>
    <property type="resolution" value="2.80 A"/>
    <property type="chains" value="A/B/C/D=1-371"/>
</dbReference>
<dbReference type="PDB" id="2R6G">
    <property type="method" value="X-ray"/>
    <property type="resolution" value="2.80 A"/>
    <property type="chains" value="A/B=1-371"/>
</dbReference>
<dbReference type="PDB" id="3FH6">
    <property type="method" value="X-ray"/>
    <property type="resolution" value="4.50 A"/>
    <property type="chains" value="A/B/C/D=1-371"/>
</dbReference>
<dbReference type="PDB" id="3GD7">
    <property type="method" value="X-ray"/>
    <property type="resolution" value="2.70 A"/>
    <property type="chains" value="A/B/C/D=219-371"/>
</dbReference>
<dbReference type="PDB" id="3PUV">
    <property type="method" value="X-ray"/>
    <property type="resolution" value="2.40 A"/>
    <property type="chains" value="A/B=1-371"/>
</dbReference>
<dbReference type="PDB" id="3PUW">
    <property type="method" value="X-ray"/>
    <property type="resolution" value="2.30 A"/>
    <property type="chains" value="A/B=1-371"/>
</dbReference>
<dbReference type="PDB" id="3PUX">
    <property type="method" value="X-ray"/>
    <property type="resolution" value="2.30 A"/>
    <property type="chains" value="A/B=1-371"/>
</dbReference>
<dbReference type="PDB" id="3PUY">
    <property type="method" value="X-ray"/>
    <property type="resolution" value="3.10 A"/>
    <property type="chains" value="A/B=1-371"/>
</dbReference>
<dbReference type="PDB" id="3PUZ">
    <property type="method" value="X-ray"/>
    <property type="resolution" value="2.90 A"/>
    <property type="chains" value="A/B=1-371"/>
</dbReference>
<dbReference type="PDB" id="3PV0">
    <property type="method" value="X-ray"/>
    <property type="resolution" value="3.10 A"/>
    <property type="chains" value="A/B=1-371"/>
</dbReference>
<dbReference type="PDB" id="3RLF">
    <property type="method" value="X-ray"/>
    <property type="resolution" value="2.20 A"/>
    <property type="chains" value="A/B=1-371"/>
</dbReference>
<dbReference type="PDB" id="4JBW">
    <property type="method" value="X-ray"/>
    <property type="resolution" value="3.91 A"/>
    <property type="chains" value="A/B/C/D=1-371"/>
</dbReference>
<dbReference type="PDB" id="4KI0">
    <property type="method" value="X-ray"/>
    <property type="resolution" value="2.38 A"/>
    <property type="chains" value="A/B=1-371"/>
</dbReference>
<dbReference type="PDBsum" id="1Q12"/>
<dbReference type="PDBsum" id="1Q1B"/>
<dbReference type="PDBsum" id="1Q1E"/>
<dbReference type="PDBsum" id="2AWN"/>
<dbReference type="PDBsum" id="2AWO"/>
<dbReference type="PDBsum" id="2R6G"/>
<dbReference type="PDBsum" id="3FH6"/>
<dbReference type="PDBsum" id="3GD7"/>
<dbReference type="PDBsum" id="3PUV"/>
<dbReference type="PDBsum" id="3PUW"/>
<dbReference type="PDBsum" id="3PUX"/>
<dbReference type="PDBsum" id="3PUY"/>
<dbReference type="PDBsum" id="3PUZ"/>
<dbReference type="PDBsum" id="3PV0"/>
<dbReference type="PDBsum" id="3RLF"/>
<dbReference type="PDBsum" id="4JBW"/>
<dbReference type="PDBsum" id="4KI0"/>
<dbReference type="SMR" id="P68187"/>
<dbReference type="BioGRID" id="4262662">
    <property type="interactions" value="20"/>
</dbReference>
<dbReference type="ComplexPortal" id="CPX-1932">
    <property type="entry name" value="Maltose ABC transporter complex"/>
</dbReference>
<dbReference type="ComplexPortal" id="CPX-1978">
    <property type="entry name" value="Enzyme IIA-maltose transport inhibitory complex"/>
</dbReference>
<dbReference type="DIP" id="DIP-47850N"/>
<dbReference type="FunCoup" id="P68187">
    <property type="interactions" value="351"/>
</dbReference>
<dbReference type="IntAct" id="P68187">
    <property type="interactions" value="8"/>
</dbReference>
<dbReference type="STRING" id="511145.b4035"/>
<dbReference type="BindingDB" id="P68187"/>
<dbReference type="MoonProt" id="P68187"/>
<dbReference type="TCDB" id="3.A.1.1.1">
    <property type="family name" value="the atp-binding cassette (abc) superfamily"/>
</dbReference>
<dbReference type="jPOST" id="P68187"/>
<dbReference type="PaxDb" id="511145-b4035"/>
<dbReference type="EnsemblBacteria" id="AAC77005">
    <property type="protein sequence ID" value="AAC77005"/>
    <property type="gene ID" value="b4035"/>
</dbReference>
<dbReference type="GeneID" id="93777800"/>
<dbReference type="GeneID" id="948537"/>
<dbReference type="KEGG" id="ecj:JW3995"/>
<dbReference type="KEGG" id="eco:b4035"/>
<dbReference type="KEGG" id="ecoc:C3026_21805"/>
<dbReference type="PATRIC" id="fig|511145.12.peg.4150"/>
<dbReference type="EchoBASE" id="EB0553"/>
<dbReference type="eggNOG" id="COG3842">
    <property type="taxonomic scope" value="Bacteria"/>
</dbReference>
<dbReference type="HOGENOM" id="CLU_000604_1_1_6"/>
<dbReference type="InParanoid" id="P68187"/>
<dbReference type="OMA" id="RCHLFKE"/>
<dbReference type="OrthoDB" id="9802264at2"/>
<dbReference type="PhylomeDB" id="P68187"/>
<dbReference type="BioCyc" id="EcoCyc:MALK-MONOMER"/>
<dbReference type="BioCyc" id="MetaCyc:MALK-MONOMER"/>
<dbReference type="BRENDA" id="7.5.2.1">
    <property type="organism ID" value="2026"/>
</dbReference>
<dbReference type="EvolutionaryTrace" id="P68187"/>
<dbReference type="PRO" id="PR:P68187"/>
<dbReference type="Proteomes" id="UP000000625">
    <property type="component" value="Chromosome"/>
</dbReference>
<dbReference type="GO" id="GO:0043190">
    <property type="term" value="C:ATP-binding cassette (ABC) transporter complex"/>
    <property type="evidence" value="ECO:0000314"/>
    <property type="project" value="EcoCyc"/>
</dbReference>
<dbReference type="GO" id="GO:0055052">
    <property type="term" value="C:ATP-binding cassette (ABC) transporter complex, substrate-binding subunit-containing"/>
    <property type="evidence" value="ECO:0000318"/>
    <property type="project" value="GO_Central"/>
</dbReference>
<dbReference type="GO" id="GO:1990154">
    <property type="term" value="C:enzyme IIA-maltose transporter complex"/>
    <property type="evidence" value="ECO:0000353"/>
    <property type="project" value="ComplexPortal"/>
</dbReference>
<dbReference type="GO" id="GO:1990060">
    <property type="term" value="C:maltose transport complex"/>
    <property type="evidence" value="ECO:0000314"/>
    <property type="project" value="EcoCyc"/>
</dbReference>
<dbReference type="GO" id="GO:0016020">
    <property type="term" value="C:membrane"/>
    <property type="evidence" value="ECO:0000314"/>
    <property type="project" value="UniProtKB"/>
</dbReference>
<dbReference type="GO" id="GO:0015423">
    <property type="term" value="F:ABC-type maltose transporter activity"/>
    <property type="evidence" value="ECO:0000314"/>
    <property type="project" value="EcoCyc"/>
</dbReference>
<dbReference type="GO" id="GO:0005524">
    <property type="term" value="F:ATP binding"/>
    <property type="evidence" value="ECO:0000314"/>
    <property type="project" value="EcoCyc"/>
</dbReference>
<dbReference type="GO" id="GO:0016887">
    <property type="term" value="F:ATP hydrolysis activity"/>
    <property type="evidence" value="ECO:0007669"/>
    <property type="project" value="InterPro"/>
</dbReference>
<dbReference type="GO" id="GO:0140297">
    <property type="term" value="F:DNA-binding transcription factor binding"/>
    <property type="evidence" value="ECO:0000353"/>
    <property type="project" value="EcoCyc"/>
</dbReference>
<dbReference type="GO" id="GO:0042956">
    <property type="term" value="P:maltodextrin transmembrane transport"/>
    <property type="evidence" value="ECO:0000314"/>
    <property type="project" value="ComplexPortal"/>
</dbReference>
<dbReference type="GO" id="GO:0015768">
    <property type="term" value="P:maltose transport"/>
    <property type="evidence" value="ECO:0000314"/>
    <property type="project" value="EcoCyc"/>
</dbReference>
<dbReference type="GO" id="GO:1902344">
    <property type="term" value="P:negative regulation of maltose transport"/>
    <property type="evidence" value="ECO:0000303"/>
    <property type="project" value="ComplexPortal"/>
</dbReference>
<dbReference type="GO" id="GO:0034763">
    <property type="term" value="P:negative regulation of transmembrane transport"/>
    <property type="evidence" value="ECO:0000303"/>
    <property type="project" value="ComplexPortal"/>
</dbReference>
<dbReference type="CDD" id="cd03301">
    <property type="entry name" value="ABC_MalK_N"/>
    <property type="match status" value="1"/>
</dbReference>
<dbReference type="FunFam" id="3.40.50.300:FF:000042">
    <property type="entry name" value="Maltose/maltodextrin ABC transporter, ATP-binding protein"/>
    <property type="match status" value="1"/>
</dbReference>
<dbReference type="FunFam" id="2.40.50.100:FF:000014">
    <property type="entry name" value="Maltose/maltodextrin import ATP-binding protein MalK"/>
    <property type="match status" value="1"/>
</dbReference>
<dbReference type="FunFam" id="2.40.50.140:FF:000070">
    <property type="entry name" value="Maltose/maltodextrin import ATP-binding protein MalK"/>
    <property type="match status" value="1"/>
</dbReference>
<dbReference type="Gene3D" id="2.40.50.100">
    <property type="match status" value="1"/>
</dbReference>
<dbReference type="Gene3D" id="2.40.50.140">
    <property type="entry name" value="Nucleic acid-binding proteins"/>
    <property type="match status" value="1"/>
</dbReference>
<dbReference type="Gene3D" id="3.40.50.300">
    <property type="entry name" value="P-loop containing nucleotide triphosphate hydrolases"/>
    <property type="match status" value="1"/>
</dbReference>
<dbReference type="InterPro" id="IPR003593">
    <property type="entry name" value="AAA+_ATPase"/>
</dbReference>
<dbReference type="InterPro" id="IPR003439">
    <property type="entry name" value="ABC_transporter-like_ATP-bd"/>
</dbReference>
<dbReference type="InterPro" id="IPR017871">
    <property type="entry name" value="ABC_transporter-like_CS"/>
</dbReference>
<dbReference type="InterPro" id="IPR015855">
    <property type="entry name" value="ABC_transpr_MalK-like"/>
</dbReference>
<dbReference type="InterPro" id="IPR047641">
    <property type="entry name" value="ABC_transpr_MalK/UgpC-like"/>
</dbReference>
<dbReference type="InterPro" id="IPR008995">
    <property type="entry name" value="Mo/tungstate-bd_C_term_dom"/>
</dbReference>
<dbReference type="InterPro" id="IPR012340">
    <property type="entry name" value="NA-bd_OB-fold"/>
</dbReference>
<dbReference type="InterPro" id="IPR027417">
    <property type="entry name" value="P-loop_NTPase"/>
</dbReference>
<dbReference type="InterPro" id="IPR013611">
    <property type="entry name" value="Transp-assoc_OB_typ2"/>
</dbReference>
<dbReference type="NCBIfam" id="NF008233">
    <property type="entry name" value="PRK11000.1"/>
    <property type="match status" value="1"/>
</dbReference>
<dbReference type="NCBIfam" id="NF008653">
    <property type="entry name" value="PRK11650.1"/>
    <property type="match status" value="1"/>
</dbReference>
<dbReference type="PANTHER" id="PTHR43875">
    <property type="entry name" value="MALTODEXTRIN IMPORT ATP-BINDING PROTEIN MSMX"/>
    <property type="match status" value="1"/>
</dbReference>
<dbReference type="PANTHER" id="PTHR43875:SF3">
    <property type="entry name" value="MALTOSE_MALTODEXTRIN IMPORT ATP-BINDING PROTEIN MALK"/>
    <property type="match status" value="1"/>
</dbReference>
<dbReference type="Pfam" id="PF00005">
    <property type="entry name" value="ABC_tran"/>
    <property type="match status" value="1"/>
</dbReference>
<dbReference type="Pfam" id="PF08402">
    <property type="entry name" value="TOBE_2"/>
    <property type="match status" value="1"/>
</dbReference>
<dbReference type="SMART" id="SM00382">
    <property type="entry name" value="AAA"/>
    <property type="match status" value="1"/>
</dbReference>
<dbReference type="SUPFAM" id="SSF50331">
    <property type="entry name" value="MOP-like"/>
    <property type="match status" value="1"/>
</dbReference>
<dbReference type="SUPFAM" id="SSF52540">
    <property type="entry name" value="P-loop containing nucleoside triphosphate hydrolases"/>
    <property type="match status" value="1"/>
</dbReference>
<dbReference type="PROSITE" id="PS00211">
    <property type="entry name" value="ABC_TRANSPORTER_1"/>
    <property type="match status" value="1"/>
</dbReference>
<dbReference type="PROSITE" id="PS50893">
    <property type="entry name" value="ABC_TRANSPORTER_2"/>
    <property type="match status" value="1"/>
</dbReference>
<dbReference type="PROSITE" id="PS51245">
    <property type="entry name" value="MALK"/>
    <property type="match status" value="1"/>
</dbReference>
<organism>
    <name type="scientific">Escherichia coli (strain K12)</name>
    <dbReference type="NCBI Taxonomy" id="83333"/>
    <lineage>
        <taxon>Bacteria</taxon>
        <taxon>Pseudomonadati</taxon>
        <taxon>Pseudomonadota</taxon>
        <taxon>Gammaproteobacteria</taxon>
        <taxon>Enterobacterales</taxon>
        <taxon>Enterobacteriaceae</taxon>
        <taxon>Escherichia</taxon>
    </lineage>
</organism>
<feature type="chain" id="PRO_0000092475" description="Maltose/maltodextrin import ATP-binding protein MalK">
    <location>
        <begin position="1"/>
        <end position="371"/>
    </location>
</feature>
<feature type="domain" description="ABC transporter" evidence="1">
    <location>
        <begin position="4"/>
        <end position="234"/>
    </location>
</feature>
<feature type="binding site" evidence="1">
    <location>
        <begin position="36"/>
        <end position="43"/>
    </location>
    <ligand>
        <name>ATP</name>
        <dbReference type="ChEBI" id="CHEBI:30616"/>
    </ligand>
</feature>
<feature type="mutagenesis site" description="Suppressor of EAA loop mutations in MalFG." evidence="10">
    <original>A</original>
    <variation>M</variation>
    <location>
        <position position="85"/>
    </location>
</feature>
<feature type="mutagenesis site" description="Suppressor of EAA loop mutations in MalFG." evidence="2">
    <original>K</original>
    <variation>C</variation>
    <location>
        <position position="106"/>
    </location>
</feature>
<feature type="mutagenesis site" description="Suppressor of EAA loop mutations in MalFG." evidence="2">
    <original>V</original>
    <variation>C</variation>
    <location>
        <position position="114"/>
    </location>
</feature>
<feature type="mutagenesis site" description="Suppressor of EAA loop mutations in MalFG." evidence="10">
    <original>V</original>
    <variation>M</variation>
    <location>
        <position position="117"/>
    </location>
</feature>
<feature type="mutagenesis site" description="Resistant to inhibitory effects of alpha-methylglucoside but retains transport capacity." evidence="6">
    <original>E</original>
    <variation>K</variation>
    <location>
        <position position="119"/>
    </location>
</feature>
<feature type="mutagenesis site" description="Resistant to inhibitory effects of alpha-methylglucoside but retains transport capacity." evidence="9">
    <original>A</original>
    <variation>T</variation>
    <location>
        <position position="124"/>
    </location>
</feature>
<feature type="mutagenesis site" description="Loss of maltose transport. Has greater ability to decrease mal gene expression than wild-type MalK." evidence="6">
    <original>G</original>
    <variation>A</variation>
    <location>
        <position position="137"/>
    </location>
</feature>
<feature type="mutagenesis site" description="Loss of maltose transport but retains ability to repress mal genes." evidence="6">
    <original>D</original>
    <variation>N</variation>
    <location>
        <position position="158"/>
    </location>
</feature>
<feature type="mutagenesis site" description="Resistant to inhibitory effects of alpha-methylglucoside but retains transport capacity." evidence="6">
    <original>R</original>
    <variation>C</variation>
    <location>
        <position position="228"/>
    </location>
</feature>
<feature type="mutagenesis site" description="Resistant to inhibitory effects of alpha-methylglucoside but retains transport capacity." evidence="9">
    <original>F</original>
    <variation>I</variation>
    <location>
        <position position="241"/>
    </location>
</feature>
<feature type="mutagenesis site" description="Normal maltose transport but constitutive mal gene expression." evidence="6">
    <original>W</original>
    <variation>G</variation>
    <location>
        <position position="267"/>
    </location>
</feature>
<feature type="mutagenesis site" description="Resistant to inhibitory effects of alpha-methylglucoside but retains transport capacity." evidence="9">
    <original>G</original>
    <variation>P</variation>
    <location>
        <position position="278"/>
    </location>
</feature>
<feature type="mutagenesis site" description="Resistant to inhibitory effects of alpha-methylglucoside but retains transport capacity." evidence="6">
    <original>S</original>
    <variation>L</variation>
    <location>
        <position position="282"/>
    </location>
</feature>
<feature type="mutagenesis site" description="Resistant to inhibitory effects of alpha-methylglucoside but retains transport capacity." evidence="9">
    <original>G</original>
    <variation>S</variation>
    <location>
        <position position="284"/>
    </location>
</feature>
<feature type="mutagenesis site" description="Resistant to inhibitory effects of alpha-methylglucoside but retains transport capacity." evidence="6">
    <original>G</original>
    <variation>D</variation>
    <location>
        <position position="302"/>
    </location>
</feature>
<feature type="mutagenesis site" description="Maltose transport is affected but retains ability to interact with MalT." evidence="3">
    <original>E</original>
    <variation>Q</variation>
    <location>
        <position position="308"/>
    </location>
</feature>
<feature type="mutagenesis site" description="Resistant to inhibitory effects of alpha-methylglucoside but retains transport capacity." evidence="6">
    <original>S</original>
    <variation>F</variation>
    <location>
        <position position="322"/>
    </location>
</feature>
<feature type="mutagenesis site" description="Maltose transport is affected but retains ability to interact with MalT." evidence="3">
    <original>G</original>
    <variation>A</variation>
    <location>
        <position position="340"/>
    </location>
</feature>
<feature type="mutagenesis site" description="Normal maltose transport but constitutive mal gene expression." evidence="6">
    <original>G</original>
    <variation>S</variation>
    <location>
        <position position="346"/>
    </location>
</feature>
<feature type="mutagenesis site" description="Maltose transport is affected but retains ability to interact with MalT." evidence="3">
    <original>F</original>
    <variation>Y</variation>
    <location>
        <position position="355"/>
    </location>
</feature>
<feature type="sequence conflict" description="In Ref. 1; AAB59057." evidence="13" ref="1">
    <original>ELYHYPADRFVAGFIGSPKMNF</original>
    <variation>AVPLSGRPFCRRIYRFAKDEL</variation>
    <location>
        <begin position="220"/>
        <end position="241"/>
    </location>
</feature>
<feature type="strand" evidence="19">
    <location>
        <begin position="4"/>
        <end position="13"/>
    </location>
</feature>
<feature type="strand" evidence="19">
    <location>
        <begin position="16"/>
        <end position="26"/>
    </location>
</feature>
<feature type="strand" evidence="19">
    <location>
        <begin position="31"/>
        <end position="35"/>
    </location>
</feature>
<feature type="helix" evidence="19">
    <location>
        <begin position="42"/>
        <end position="49"/>
    </location>
</feature>
<feature type="strand" evidence="14">
    <location>
        <begin position="51"/>
        <end position="53"/>
    </location>
</feature>
<feature type="strand" evidence="19">
    <location>
        <begin position="56"/>
        <end position="62"/>
    </location>
</feature>
<feature type="helix" evidence="19">
    <location>
        <begin position="72"/>
        <end position="74"/>
    </location>
</feature>
<feature type="strand" evidence="19">
    <location>
        <begin position="77"/>
        <end position="80"/>
    </location>
</feature>
<feature type="turn" evidence="18">
    <location>
        <begin position="82"/>
        <end position="85"/>
    </location>
</feature>
<feature type="strand" evidence="16">
    <location>
        <begin position="88"/>
        <end position="90"/>
    </location>
</feature>
<feature type="helix" evidence="19">
    <location>
        <begin position="92"/>
        <end position="96"/>
    </location>
</feature>
<feature type="helix" evidence="19">
    <location>
        <begin position="98"/>
        <end position="102"/>
    </location>
</feature>
<feature type="helix" evidence="19">
    <location>
        <begin position="107"/>
        <end position="120"/>
    </location>
</feature>
<feature type="helix" evidence="19">
    <location>
        <begin position="124"/>
        <end position="126"/>
    </location>
</feature>
<feature type="helix" evidence="19">
    <location>
        <begin position="131"/>
        <end position="133"/>
    </location>
</feature>
<feature type="helix" evidence="19">
    <location>
        <begin position="136"/>
        <end position="150"/>
    </location>
</feature>
<feature type="strand" evidence="19">
    <location>
        <begin position="153"/>
        <end position="159"/>
    </location>
</feature>
<feature type="turn" evidence="19">
    <location>
        <begin position="160"/>
        <end position="163"/>
    </location>
</feature>
<feature type="helix" evidence="19">
    <location>
        <begin position="166"/>
        <end position="183"/>
    </location>
</feature>
<feature type="strand" evidence="19">
    <location>
        <begin position="186"/>
        <end position="190"/>
    </location>
</feature>
<feature type="helix" evidence="19">
    <location>
        <begin position="194"/>
        <end position="200"/>
    </location>
</feature>
<feature type="strand" evidence="19">
    <location>
        <begin position="202"/>
        <end position="208"/>
    </location>
</feature>
<feature type="strand" evidence="19">
    <location>
        <begin position="211"/>
        <end position="216"/>
    </location>
</feature>
<feature type="helix" evidence="19">
    <location>
        <begin position="218"/>
        <end position="223"/>
    </location>
</feature>
<feature type="helix" evidence="19">
    <location>
        <begin position="228"/>
        <end position="233"/>
    </location>
</feature>
<feature type="strand" evidence="19">
    <location>
        <begin position="234"/>
        <end position="237"/>
    </location>
</feature>
<feature type="strand" evidence="19">
    <location>
        <begin position="240"/>
        <end position="249"/>
    </location>
</feature>
<feature type="strand" evidence="19">
    <location>
        <begin position="254"/>
        <end position="257"/>
    </location>
</feature>
<feature type="helix" evidence="15">
    <location>
        <begin position="261"/>
        <end position="263"/>
    </location>
</feature>
<feature type="strand" evidence="19">
    <location>
        <begin position="265"/>
        <end position="270"/>
    </location>
</feature>
<feature type="strand" evidence="19">
    <location>
        <begin position="280"/>
        <end position="285"/>
    </location>
</feature>
<feature type="turn" evidence="19">
    <location>
        <begin position="287"/>
        <end position="289"/>
    </location>
</feature>
<feature type="helix" evidence="19">
    <location>
        <begin position="293"/>
        <end position="295"/>
    </location>
</feature>
<feature type="strand" evidence="19">
    <location>
        <begin position="297"/>
        <end position="309"/>
    </location>
</feature>
<feature type="strand" evidence="19">
    <location>
        <begin position="311"/>
        <end position="319"/>
    </location>
</feature>
<feature type="strand" evidence="17">
    <location>
        <begin position="323"/>
        <end position="325"/>
    </location>
</feature>
<feature type="strand" evidence="19">
    <location>
        <begin position="327"/>
        <end position="333"/>
    </location>
</feature>
<feature type="strand" evidence="19">
    <location>
        <begin position="342"/>
        <end position="346"/>
    </location>
</feature>
<feature type="helix" evidence="19">
    <location>
        <begin position="349"/>
        <end position="351"/>
    </location>
</feature>
<feature type="strand" evidence="19">
    <location>
        <begin position="353"/>
        <end position="355"/>
    </location>
</feature>
<feature type="strand" evidence="19">
    <location>
        <begin position="359"/>
        <end position="361"/>
    </location>
</feature>
<protein>
    <recommendedName>
        <fullName evidence="1">Maltose/maltodextrin import ATP-binding protein MalK</fullName>
        <ecNumber evidence="1 7 8">7.5.2.1</ecNumber>
    </recommendedName>
</protein>
<reference key="1">
    <citation type="journal article" date="1982" name="Nucleic Acids Res.">
        <title>Sequence of the malK gene in E.coli K12.</title>
        <authorList>
            <person name="Gilson E."/>
            <person name="Nikaido H."/>
            <person name="Hofnung M."/>
        </authorList>
    </citation>
    <scope>NUCLEOTIDE SEQUENCE [GENOMIC DNA]</scope>
    <source>
        <strain>K12</strain>
    </source>
</reference>
<reference key="2">
    <citation type="journal article" date="1989" name="Mol. Gen. Genet.">
        <title>Comparison of sequences from the malB regions of Salmonella typhimurium and Enterobacter aerogenes with Escherichia coli K12: a potential new regulatory site in the interoperonic region.</title>
        <authorList>
            <person name="Dahl M.K."/>
            <person name="Francoz E."/>
            <person name="Saurin W."/>
            <person name="Boos W."/>
            <person name="Manson M.D."/>
            <person name="Hofnung M."/>
        </authorList>
    </citation>
    <scope>SEQUENCE REVISION</scope>
</reference>
<reference key="3">
    <citation type="journal article" date="1993" name="Nucleic Acids Res.">
        <title>Analysis of the Escherichia coli genome. IV. DNA sequence of the region from 89.2 to 92.8 minutes.</title>
        <authorList>
            <person name="Blattner F.R."/>
            <person name="Burland V.D."/>
            <person name="Plunkett G. III"/>
            <person name="Sofia H.J."/>
            <person name="Daniels D.L."/>
        </authorList>
    </citation>
    <scope>NUCLEOTIDE SEQUENCE [LARGE SCALE GENOMIC DNA]</scope>
    <source>
        <strain>K12 / MG1655 / ATCC 47076</strain>
    </source>
</reference>
<reference key="4">
    <citation type="journal article" date="1997" name="Science">
        <title>The complete genome sequence of Escherichia coli K-12.</title>
        <authorList>
            <person name="Blattner F.R."/>
            <person name="Plunkett G. III"/>
            <person name="Bloch C.A."/>
            <person name="Perna N.T."/>
            <person name="Burland V."/>
            <person name="Riley M."/>
            <person name="Collado-Vides J."/>
            <person name="Glasner J.D."/>
            <person name="Rode C.K."/>
            <person name="Mayhew G.F."/>
            <person name="Gregor J."/>
            <person name="Davis N.W."/>
            <person name="Kirkpatrick H.A."/>
            <person name="Goeden M.A."/>
            <person name="Rose D.J."/>
            <person name="Mau B."/>
            <person name="Shao Y."/>
        </authorList>
    </citation>
    <scope>NUCLEOTIDE SEQUENCE [LARGE SCALE GENOMIC DNA]</scope>
    <source>
        <strain>K12 / MG1655 / ATCC 47076</strain>
    </source>
</reference>
<reference key="5">
    <citation type="journal article" date="2006" name="Mol. Syst. Biol.">
        <title>Highly accurate genome sequences of Escherichia coli K-12 strains MG1655 and W3110.</title>
        <authorList>
            <person name="Hayashi K."/>
            <person name="Morooka N."/>
            <person name="Yamamoto Y."/>
            <person name="Fujita K."/>
            <person name="Isono K."/>
            <person name="Choi S."/>
            <person name="Ohtsubo E."/>
            <person name="Baba T."/>
            <person name="Wanner B.L."/>
            <person name="Mori H."/>
            <person name="Horiuchi T."/>
        </authorList>
    </citation>
    <scope>NUCLEOTIDE SEQUENCE [LARGE SCALE GENOMIC DNA]</scope>
    <source>
        <strain>K12 / W3110 / ATCC 27325 / DSM 5911</strain>
    </source>
</reference>
<reference key="6">
    <citation type="journal article" date="1982" name="Mol. Gen. Genet.">
        <title>A DNA sequence containing the control regions of the malEFG and malK-lamB operons in Escherichia coli K12.</title>
        <authorList>
            <person name="Bedouelle H."/>
            <person name="Hofnung M."/>
        </authorList>
    </citation>
    <scope>NUCLEOTIDE SEQUENCE [GENOMIC DNA] OF 1-30</scope>
</reference>
<reference key="7">
    <citation type="journal article" date="1990" name="J. Biol. Chem.">
        <title>Overproduction, solubilization, and reconstitution of the maltose transport system from Escherichia coli.</title>
        <authorList>
            <person name="Davidson A.L."/>
            <person name="Nikaido H."/>
        </authorList>
    </citation>
    <scope>CHARACTERIZATION OF MALTOSE TRANSPORT AND ATP HYDROLYSIS ACTIVITIES</scope>
    <scope>FUNCTION</scope>
    <scope>CATALYTIC ACTIVITY</scope>
    <scope>SUBUNIT</scope>
    <source>
        <strain>K12</strain>
    </source>
</reference>
<reference key="8">
    <citation type="journal article" date="1990" name="J. Biol. Chem.">
        <title>Regulation of the maltose transport system of Escherichia coli by the glucose-specific enzyme III of the phosphoenolpyruvate-sugar phosphotransferase system. Characterization of inducer exclusion-resistant mutants and reconstitution of inducer exclusion in proteoliposomes.</title>
        <authorList>
            <person name="Dean D.A."/>
            <person name="Reizer J."/>
            <person name="Nikaido H."/>
            <person name="Saier M.H. Jr."/>
        </authorList>
    </citation>
    <scope>REGULATION</scope>
    <scope>MUTAGENESIS OF ALA-124; PHE-241; GLY-278 AND GLY-284</scope>
</reference>
<reference key="9">
    <citation type="journal article" date="1991" name="J. Biol. Chem.">
        <title>Purification and characterization of the membrane-associated components of the maltose transport system from Escherichia coli.</title>
        <authorList>
            <person name="Davidson A.L."/>
            <person name="Nikaido H."/>
        </authorList>
    </citation>
    <scope>PURIFICATION OF THE MALK-MALF-MALG COMPLEX AND ITS ATPASE ACTIVITY</scope>
    <scope>FUNCTION</scope>
    <scope>CATALYTIC ACTIVITY</scope>
    <scope>SUBUNIT</scope>
</reference>
<reference key="10">
    <citation type="journal article" date="1991" name="J. Bacteriol.">
        <title>The activities of the Escherichia coli MalK protein in maltose transport, regulation, and inducer exclusion can be separated by mutations.</title>
        <authorList>
            <person name="Kuehnau S."/>
            <person name="Reyes M."/>
            <person name="Sievertsen A."/>
            <person name="Shuman H.A."/>
            <person name="Boos W."/>
        </authorList>
    </citation>
    <scope>REGULATION</scope>
    <scope>MUTAGENESIS OF GLU-119; GLY-137; ASP-158; ARG-228; TRP-267; SER-282; GLY-302; SER-322 AND GLY-346</scope>
</reference>
<reference key="11">
    <citation type="journal article" date="1998" name="Mol. Microbiol.">
        <title>The ATP-binding cassette subunit of the maltose transporter MalK antagonizes MalT, the activator of the Escherichia coli mal regulon.</title>
        <authorList>
            <person name="Panagiotidis C.H."/>
            <person name="Boos W."/>
            <person name="Shuman H.A."/>
        </authorList>
    </citation>
    <scope>INTERACTION BETWEEN MALK AND MALT</scope>
</reference>
<reference key="12">
    <citation type="journal article" date="1997" name="EMBO J.">
        <title>Subunit interactions in ABC transporters: a conserved sequence in hydrophobic membrane proteins of periplasmic permeases defines an important site of interaction with the ATPase subunits.</title>
        <authorList>
            <person name="Mourez M."/>
            <person name="Hofnung M."/>
            <person name="Dassa E."/>
        </authorList>
    </citation>
    <scope>MUTAGENESIS OF ALA-85 AND VAL-117</scope>
</reference>
<reference key="13">
    <citation type="journal article" date="2000" name="J. Biol. Chem.">
        <title>ATP modulates subunit-subunit interactions in an ATP-binding cassette transporter (MalFGK2) determined by site-directed chemical cross-linking.</title>
        <authorList>
            <person name="Hunke S."/>
            <person name="Mourez M."/>
            <person name="Jehanno M."/>
            <person name="Dassa E."/>
            <person name="Schneider E."/>
        </authorList>
    </citation>
    <scope>MUTAGENESIS OF LYS-106 AND VAL-114</scope>
</reference>
<reference key="14">
    <citation type="journal article" date="2002" name="J. Biol. Chem.">
        <title>Structural model of MalK, the ABC subunit of the maltose transporter of Escherichia coli: implications for mal gene regulation, inducer exclusion, and subunit assembly.</title>
        <authorList>
            <person name="Boehm A."/>
            <person name="Diez J."/>
            <person name="Diederichs K."/>
            <person name="Welte W."/>
            <person name="Boos W."/>
        </authorList>
    </citation>
    <scope>MUTAGENESIS OF GLU-308; GLY-340 AND PHE-355</scope>
    <scope>MODELING</scope>
</reference>
<reference key="15">
    <citation type="journal article" date="2005" name="J. Biol. Chem.">
        <title>Protein complexes of the Escherichia coli cell envelope.</title>
        <authorList>
            <person name="Stenberg F."/>
            <person name="Chovanec P."/>
            <person name="Maslen S.L."/>
            <person name="Robinson C.V."/>
            <person name="Ilag L."/>
            <person name="von Heijne G."/>
            <person name="Daley D.O."/>
        </authorList>
    </citation>
    <scope>SUBCELLULAR LOCATION</scope>
    <source>
        <strain>BL21-DE3</strain>
    </source>
</reference>
<reference key="16">
    <citation type="journal article" date="2008" name="J. Biol. Chem.">
        <title>Biogenesis of MalF and the MalFGK(2) maltose transport complex in Escherichia coli requires YidC.</title>
        <authorList>
            <person name="Wagner S."/>
            <person name="Pop O.I."/>
            <person name="Haan G.J."/>
            <person name="Baars L."/>
            <person name="Koningstein G."/>
            <person name="Klepsch M.M."/>
            <person name="Genevaux P."/>
            <person name="Luirink J."/>
            <person name="de Gier J.W."/>
        </authorList>
    </citation>
    <scope>SUBUNIT</scope>
    <scope>SUBCELLULAR LOCATION</scope>
    <scope>REQUIREMENT FOR YIDC FOR PROTEIN AND COMPLEX FORMATION</scope>
</reference>
<reference key="17">
    <citation type="journal article" date="1998" name="Microbiol. Mol. Biol. Rev.">
        <title>Maltose/maltodextrin system of Escherichia coli: transport, metabolism, and regulation.</title>
        <authorList>
            <person name="Boos W."/>
            <person name="Shuman H."/>
        </authorList>
    </citation>
    <scope>REVIEW</scope>
</reference>
<reference key="18">
    <citation type="book" date="2003" name="ABC proteins from bacteria to man">
        <title>Import of solutes by ABC transporters - The maltose and other systems.</title>
        <editorList>
            <person name="Holland I.B."/>
            <person name="Cole S.P.C."/>
            <person name="Kuchler K."/>
            <person name="Higgins C.F."/>
        </editorList>
        <authorList>
            <person name="Schneider E."/>
        </authorList>
    </citation>
    <scope>REVIEW</scope>
</reference>
<reference key="19">
    <citation type="journal article" date="2003" name="Mol. Cell">
        <title>A tweezers-like motion of the ATP-binding cassette dimer in an ABC transport cycle.</title>
        <authorList>
            <person name="Chen J."/>
            <person name="Lu G."/>
            <person name="Lin J."/>
            <person name="Davidson A.L."/>
            <person name="Quiocho F.A."/>
        </authorList>
    </citation>
    <scope>X-RAY CRYSTALLOGRAPHY (2.6 ANGSTROMS)</scope>
</reference>
<keyword id="KW-0002">3D-structure</keyword>
<keyword id="KW-0067">ATP-binding</keyword>
<keyword id="KW-0997">Cell inner membrane</keyword>
<keyword id="KW-1003">Cell membrane</keyword>
<keyword id="KW-0472">Membrane</keyword>
<keyword id="KW-0547">Nucleotide-binding</keyword>
<keyword id="KW-1185">Reference proteome</keyword>
<keyword id="KW-0762">Sugar transport</keyword>
<keyword id="KW-1278">Translocase</keyword>
<keyword id="KW-0813">Transport</keyword>
<proteinExistence type="evidence at protein level"/>
<accession>P68187</accession>
<accession>P02914</accession>
<accession>Q2M6R9</accession>
<accession>Q47348</accession>
<comment type="function">
    <text evidence="7 8">Part of the ABC transporter complex MalEFGK involved in maltose/maltodextrin import. Responsible for energy coupling to the transport system.</text>
</comment>
<comment type="catalytic activity">
    <reaction evidence="1 7 8">
        <text>D-maltose(out) + ATP + H2O = D-maltose(in) + ADP + phosphate + H(+)</text>
        <dbReference type="Rhea" id="RHEA:22132"/>
        <dbReference type="ChEBI" id="CHEBI:15377"/>
        <dbReference type="ChEBI" id="CHEBI:15378"/>
        <dbReference type="ChEBI" id="CHEBI:17306"/>
        <dbReference type="ChEBI" id="CHEBI:30616"/>
        <dbReference type="ChEBI" id="CHEBI:43474"/>
        <dbReference type="ChEBI" id="CHEBI:456216"/>
        <dbReference type="EC" id="7.5.2.1"/>
    </reaction>
</comment>
<comment type="subunit">
    <text evidence="5 7 8">The complex is composed of two ATP-binding proteins (MalK), two transmembrane proteins (MalG and MalF) and a solute-binding protein (MalE). Protein stability and stable complex formation require YidC.</text>
</comment>
<comment type="subcellular location">
    <subcellularLocation>
        <location evidence="1 4 5">Cell inner membrane</location>
        <topology evidence="1 4 5">Peripheral membrane protein</topology>
    </subcellularLocation>
</comment>
<comment type="miscellaneous">
    <text evidence="9">Target for inducer exclusion, mediated by the unphosphorylated enzyme III of the phosphotransferase system for glucose and resulting in the inhibition of maltose transport.</text>
</comment>
<comment type="miscellaneous">
    <text evidence="11">Acts as a repressor of mal genes. In absence of maltose, the C-terminus of MalK interacts with MalT, then MalT becomes inactive and the mal genes are not activated. In presence of maltose, MalK is tightly associated with the MalFG complex and has no affinity for MalT.</text>
</comment>
<comment type="similarity">
    <text evidence="1">Belongs to the ABC transporter superfamily. Maltooligosaccharide importer (TC 3.A.1.1.1) family.</text>
</comment>
<comment type="sequence caution" evidence="13">
    <conflict type="erroneous initiation">
        <sequence resource="EMBL-CDS" id="CAA23582"/>
    </conflict>
    <text>Extended N-terminus.</text>
</comment>
<name>MALK_ECOLI</name>
<sequence>MASVQLQNVTKAWGEVVVSKDINLDIHEGEFVVFVGPSGCGKSTLLRMIAGLETITSGDLFIGEKRMNDTPPAERGVGMVFQSYALYPHLSVAENMSFGLKLAGAKKEVINQRVNQVAEVLQLAHLLDRKPKALSGGQRQRVAIGRTLVAEPSVFLLDEPLSNLDAALRVQMRIEISRLHKRLGRTMIYVTHDQVEAMTLADKIVVLDAGRVAQVGKPLELYHYPADRFVAGFIGSPKMNFLPVKVTATAIDQVQVELPMPNRQQVWLPVESRDVQVGANMSLGIRPEHLLPSDIADVILEGEVQVVEQLGNETQIHIQIPSIRQNLVYRQNDVVLVEEGATFAIGLPPERCHLFREDGTACRRLHKEPGV</sequence>
<gene>
    <name evidence="1 12" type="primary">malK</name>
    <name type="ordered locus">b4035</name>
    <name type="ordered locus">JW3995</name>
</gene>
<evidence type="ECO:0000255" key="1">
    <source>
        <dbReference type="HAMAP-Rule" id="MF_01709"/>
    </source>
</evidence>
<evidence type="ECO:0000269" key="2">
    <source>
    </source>
</evidence>
<evidence type="ECO:0000269" key="3">
    <source>
    </source>
</evidence>
<evidence type="ECO:0000269" key="4">
    <source>
    </source>
</evidence>
<evidence type="ECO:0000269" key="5">
    <source>
    </source>
</evidence>
<evidence type="ECO:0000269" key="6">
    <source>
    </source>
</evidence>
<evidence type="ECO:0000269" key="7">
    <source>
    </source>
</evidence>
<evidence type="ECO:0000269" key="8">
    <source>
    </source>
</evidence>
<evidence type="ECO:0000269" key="9">
    <source>
    </source>
</evidence>
<evidence type="ECO:0000269" key="10">
    <source>
    </source>
</evidence>
<evidence type="ECO:0000269" key="11">
    <source>
    </source>
</evidence>
<evidence type="ECO:0000303" key="12">
    <source>
    </source>
</evidence>
<evidence type="ECO:0000305" key="13"/>
<evidence type="ECO:0007829" key="14">
    <source>
        <dbReference type="PDB" id="1Q12"/>
    </source>
</evidence>
<evidence type="ECO:0007829" key="15">
    <source>
        <dbReference type="PDB" id="1Q1B"/>
    </source>
</evidence>
<evidence type="ECO:0007829" key="16">
    <source>
        <dbReference type="PDB" id="1Q1E"/>
    </source>
</evidence>
<evidence type="ECO:0007829" key="17">
    <source>
        <dbReference type="PDB" id="2AWN"/>
    </source>
</evidence>
<evidence type="ECO:0007829" key="18">
    <source>
        <dbReference type="PDB" id="3PV0"/>
    </source>
</evidence>
<evidence type="ECO:0007829" key="19">
    <source>
        <dbReference type="PDB" id="3RLF"/>
    </source>
</evidence>